<organism>
    <name type="scientific">Soybean mosaic virus (strain G2)</name>
    <name type="common">SMV</name>
    <dbReference type="NCBI Taxonomy" id="103931"/>
    <lineage>
        <taxon>Viruses</taxon>
        <taxon>Riboviria</taxon>
        <taxon>Orthornavirae</taxon>
        <taxon>Pisuviricota</taxon>
        <taxon>Stelpaviricetes</taxon>
        <taxon>Patatavirales</taxon>
        <taxon>Potyviridae</taxon>
        <taxon>Potyvirus</taxon>
        <taxon>Potyvirus glycitessellati</taxon>
        <taxon>Soybean mosaic virus</taxon>
    </lineage>
</organism>
<protein>
    <recommendedName>
        <fullName>Genome polyprotein</fullName>
    </recommendedName>
    <component>
        <recommendedName>
            <fullName>P1 protease</fullName>
            <ecNumber>3.4.21.-</ecNumber>
        </recommendedName>
        <alternativeName>
            <fullName>Leader protease P1</fullName>
        </alternativeName>
        <alternativeName>
            <fullName>N-terminal protein</fullName>
        </alternativeName>
        <alternativeName>
            <fullName>P1 proteinase</fullName>
        </alternativeName>
    </component>
    <component>
        <recommendedName>
            <fullName>Helper component proteinase</fullName>
            <shortName>HC-pro</shortName>
            <ecNumber evidence="2">3.4.22.45</ecNumber>
        </recommendedName>
    </component>
    <component>
        <recommendedName>
            <fullName>Protein P3</fullName>
        </recommendedName>
    </component>
    <component>
        <recommendedName>
            <fullName>6 kDa protein 1</fullName>
            <shortName>6K1</shortName>
        </recommendedName>
    </component>
    <component>
        <recommendedName>
            <fullName>Cytoplasmic inclusion protein</fullName>
            <shortName>CI</shortName>
            <ecNumber>3.6.4.-</ecNumber>
        </recommendedName>
    </component>
    <component>
        <recommendedName>
            <fullName>6 kDa protein 2</fullName>
            <shortName>6K2</shortName>
        </recommendedName>
    </component>
    <component>
        <recommendedName>
            <fullName>Viral genome-linked protein</fullName>
        </recommendedName>
        <alternativeName>
            <fullName>VPg</fullName>
        </alternativeName>
    </component>
    <component>
        <recommendedName>
            <fullName>Nuclear inclusion protein A</fullName>
            <shortName>NI-a</shortName>
            <shortName>NIa</shortName>
            <ecNumber>3.4.22.44</ecNumber>
        </recommendedName>
        <alternativeName>
            <fullName>49 kDa proteinase</fullName>
            <shortName>49 kDa-Pro</shortName>
        </alternativeName>
        <alternativeName>
            <fullName>NIa-pro</fullName>
        </alternativeName>
    </component>
    <component>
        <recommendedName>
            <fullName>Nuclear inclusion protein B</fullName>
            <shortName>NI-b</shortName>
            <shortName>NIb</shortName>
            <ecNumber>2.7.7.48</ecNumber>
        </recommendedName>
        <alternativeName>
            <fullName>RNA-directed RNA polymerase</fullName>
        </alternativeName>
    </component>
    <component>
        <recommendedName>
            <fullName>Capsid protein</fullName>
            <shortName>CP</shortName>
        </recommendedName>
        <alternativeName>
            <fullName>Coat protein</fullName>
        </alternativeName>
    </component>
</protein>
<organismHost>
    <name type="scientific">Glycine max</name>
    <name type="common">Soybean</name>
    <name type="synonym">Glycine hispida</name>
    <dbReference type="NCBI Taxonomy" id="3847"/>
</organismHost>
<reference key="1">
    <citation type="journal article" date="1992" name="J. Gen. Virol.">
        <title>Complete nucleotide sequences of two soybean mosaic virus strains differentiated by response of soybean containing the Rsv resistance gene.</title>
        <authorList>
            <person name="Jayaram C."/>
            <person name="Hill J.H."/>
            <person name="Miller W.A."/>
        </authorList>
    </citation>
    <scope>NUCLEOTIDE SEQUENCE [GENOMIC RNA]</scope>
</reference>
<reference key="2">
    <citation type="journal article" date="2001" name="Virus Res.">
        <title>Potyvirus proteins: a wealth of functions.</title>
        <authorList>
            <person name="Urcuqui-Inchima S."/>
            <person name="Haenni A.L."/>
            <person name="Bernardi F."/>
        </authorList>
    </citation>
    <scope>REVIEW</scope>
</reference>
<accession>Q90069</accession>
<feature type="chain" id="PRO_0000420022" description="Genome polyprotein">
    <location>
        <begin position="1"/>
        <end position="3066"/>
    </location>
</feature>
<feature type="chain" id="PRO_0000040428" description="P1 protease" evidence="9">
    <location>
        <begin position="1"/>
        <end position="308"/>
    </location>
</feature>
<feature type="chain" id="PRO_0000040429" description="Helper component proteinase" evidence="9">
    <location>
        <begin position="309"/>
        <end position="765"/>
    </location>
</feature>
<feature type="chain" id="PRO_0000040430" description="Protein P3" evidence="1">
    <location>
        <begin position="766"/>
        <end position="1112"/>
    </location>
</feature>
<feature type="chain" id="PRO_0000040431" description="6 kDa protein 1" evidence="1">
    <location>
        <begin position="1113"/>
        <end position="1164"/>
    </location>
</feature>
<feature type="chain" id="PRO_0000040432" description="Cytoplasmic inclusion protein" evidence="1">
    <location>
        <begin position="1165"/>
        <end position="1798"/>
    </location>
</feature>
<feature type="chain" id="PRO_0000040433" description="6 kDa protein 2" evidence="1">
    <location>
        <begin position="1799"/>
        <end position="1851"/>
    </location>
</feature>
<feature type="chain" id="PRO_0000040434" description="Viral genome-linked protein" evidence="1">
    <location>
        <begin position="1852"/>
        <end position="2041"/>
    </location>
</feature>
<feature type="chain" id="PRO_0000040435" description="Nuclear inclusion protein A" evidence="1">
    <location>
        <begin position="2042"/>
        <end position="2284"/>
    </location>
</feature>
<feature type="chain" id="PRO_0000040436" description="Nuclear inclusion protein B" evidence="1">
    <location>
        <begin position="2285"/>
        <end position="2801"/>
    </location>
</feature>
<feature type="chain" id="PRO_0000040437" description="Capsid protein" evidence="1">
    <location>
        <begin position="2802"/>
        <end position="3066"/>
    </location>
</feature>
<feature type="domain" description="Peptidase S30" evidence="15">
    <location>
        <begin position="168"/>
        <end position="308"/>
    </location>
</feature>
<feature type="domain" description="Peptidase C6" evidence="14">
    <location>
        <begin position="643"/>
        <end position="765"/>
    </location>
</feature>
<feature type="domain" description="Helicase ATP-binding" evidence="11">
    <location>
        <begin position="1236"/>
        <end position="1388"/>
    </location>
</feature>
<feature type="domain" description="Helicase C-terminal" evidence="12">
    <location>
        <begin position="1407"/>
        <end position="1566"/>
    </location>
</feature>
<feature type="domain" description="Peptidase C4" evidence="13">
    <location>
        <begin position="2042"/>
        <end position="2260"/>
    </location>
</feature>
<feature type="domain" description="RdRp catalytic" evidence="10">
    <location>
        <begin position="2526"/>
        <end position="2650"/>
    </location>
</feature>
<feature type="region of interest" description="Disordered" evidence="16">
    <location>
        <begin position="2799"/>
        <end position="2836"/>
    </location>
</feature>
<feature type="short sequence motif" description="Involved in interaction with stylet and aphid transmission" evidence="1">
    <location>
        <begin position="361"/>
        <end position="364"/>
    </location>
</feature>
<feature type="short sequence motif" description="Involved in virions binding and aphid transmission" evidence="1">
    <location>
        <begin position="617"/>
        <end position="619"/>
    </location>
</feature>
<feature type="short sequence motif" description="DECH box">
    <location>
        <begin position="1338"/>
        <end position="1341"/>
    </location>
</feature>
<feature type="short sequence motif" description="Nuclear localization signal" evidence="9">
    <location>
        <begin position="1891"/>
        <end position="1900"/>
    </location>
</feature>
<feature type="compositionally biased region" description="Basic and acidic residues" evidence="16">
    <location>
        <begin position="2803"/>
        <end position="2818"/>
    </location>
</feature>
<feature type="compositionally biased region" description="Low complexity" evidence="16">
    <location>
        <begin position="2819"/>
        <end position="2831"/>
    </location>
</feature>
<feature type="active site" description="For P1 proteinase activity" evidence="15">
    <location>
        <position position="221"/>
    </location>
</feature>
<feature type="active site" description="For P1 proteinase activity" evidence="15">
    <location>
        <position position="230"/>
    </location>
</feature>
<feature type="active site" description="For P1 proteinase activity" evidence="15">
    <location>
        <position position="262"/>
    </location>
</feature>
<feature type="active site" description="For helper component proteinase activity" evidence="14">
    <location>
        <position position="651"/>
    </location>
</feature>
<feature type="active site" description="For helper component proteinase activity" evidence="14">
    <location>
        <position position="724"/>
    </location>
</feature>
<feature type="active site" description="For nuclear inclusion protein A activity" evidence="13">
    <location>
        <position position="2087"/>
    </location>
</feature>
<feature type="active site" description="For nuclear inclusion protein A activity" evidence="13">
    <location>
        <position position="2122"/>
    </location>
</feature>
<feature type="active site" description="For nuclear inclusion protein A activity" evidence="13">
    <location>
        <position position="2192"/>
    </location>
</feature>
<feature type="binding site" evidence="11">
    <location>
        <begin position="1249"/>
        <end position="1256"/>
    </location>
    <ligand>
        <name>ATP</name>
        <dbReference type="ChEBI" id="CHEBI:30616"/>
    </ligand>
</feature>
<feature type="site" description="Cleavage; by P1 proteinase" evidence="15">
    <location>
        <begin position="308"/>
        <end position="309"/>
    </location>
</feature>
<feature type="site" description="Cleavage; by autolysis" evidence="14">
    <location>
        <begin position="765"/>
        <end position="766"/>
    </location>
</feature>
<feature type="site" description="Cleavage; by NIa-pro" evidence="6">
    <location>
        <begin position="1112"/>
        <end position="1113"/>
    </location>
</feature>
<feature type="site" description="Cleavage; by NIa-pro" evidence="6">
    <location>
        <begin position="1164"/>
        <end position="1165"/>
    </location>
</feature>
<feature type="site" description="Cleavage; by NIa-pro" evidence="6">
    <location>
        <begin position="1798"/>
        <end position="1799"/>
    </location>
</feature>
<feature type="site" description="Cleavage; by NIa-pro" evidence="6">
    <location>
        <begin position="1851"/>
        <end position="1852"/>
    </location>
</feature>
<feature type="site" description="Cleavage; by NIa-pro" evidence="6">
    <location>
        <begin position="2041"/>
        <end position="2042"/>
    </location>
</feature>
<feature type="site" description="Cleavage; by NIa-pro" evidence="6">
    <location>
        <begin position="2284"/>
        <end position="2285"/>
    </location>
</feature>
<feature type="site" description="Cleavage; by NIa-pro" evidence="6">
    <location>
        <begin position="2801"/>
        <end position="2802"/>
    </location>
</feature>
<feature type="modified residue" description="O-(5'-phospho-RNA)-tyrosine" evidence="3">
    <location>
        <position position="1915"/>
    </location>
</feature>
<feature type="modified residue" description="Phosphothreonine" evidence="5">
    <location>
        <position position="3048"/>
    </location>
</feature>
<proteinExistence type="inferred from homology"/>
<dbReference type="EC" id="3.4.21.-"/>
<dbReference type="EC" id="3.4.22.45" evidence="2"/>
<dbReference type="EC" id="3.6.4.-"/>
<dbReference type="EC" id="3.4.22.44"/>
<dbReference type="EC" id="2.7.7.48"/>
<dbReference type="EMBL" id="S42280">
    <property type="protein sequence ID" value="AAB22819.2"/>
    <property type="molecule type" value="Genomic_RNA"/>
</dbReference>
<dbReference type="PIR" id="JQ1661">
    <property type="entry name" value="JQ1661"/>
</dbReference>
<dbReference type="Proteomes" id="UP000007189">
    <property type="component" value="Genome"/>
</dbReference>
<dbReference type="GO" id="GO:0019029">
    <property type="term" value="C:helical viral capsid"/>
    <property type="evidence" value="ECO:0007669"/>
    <property type="project" value="UniProtKB-KW"/>
</dbReference>
<dbReference type="GO" id="GO:0044161">
    <property type="term" value="C:host cell cytoplasmic vesicle"/>
    <property type="evidence" value="ECO:0007669"/>
    <property type="project" value="UniProtKB-SubCell"/>
</dbReference>
<dbReference type="GO" id="GO:0042025">
    <property type="term" value="C:host cell nucleus"/>
    <property type="evidence" value="ECO:0007669"/>
    <property type="project" value="UniProtKB-SubCell"/>
</dbReference>
<dbReference type="GO" id="GO:0005524">
    <property type="term" value="F:ATP binding"/>
    <property type="evidence" value="ECO:0007669"/>
    <property type="project" value="UniProtKB-KW"/>
</dbReference>
<dbReference type="GO" id="GO:0004197">
    <property type="term" value="F:cysteine-type endopeptidase activity"/>
    <property type="evidence" value="ECO:0007669"/>
    <property type="project" value="InterPro"/>
</dbReference>
<dbReference type="GO" id="GO:0004386">
    <property type="term" value="F:helicase activity"/>
    <property type="evidence" value="ECO:0007669"/>
    <property type="project" value="UniProtKB-KW"/>
</dbReference>
<dbReference type="GO" id="GO:0016818">
    <property type="term" value="F:hydrolase activity, acting on acid anhydrides, in phosphorus-containing anhydrides"/>
    <property type="evidence" value="ECO:0007669"/>
    <property type="project" value="InterPro"/>
</dbReference>
<dbReference type="GO" id="GO:0003723">
    <property type="term" value="F:RNA binding"/>
    <property type="evidence" value="ECO:0007669"/>
    <property type="project" value="InterPro"/>
</dbReference>
<dbReference type="GO" id="GO:0003968">
    <property type="term" value="F:RNA-directed RNA polymerase activity"/>
    <property type="evidence" value="ECO:0007669"/>
    <property type="project" value="UniProtKB-KW"/>
</dbReference>
<dbReference type="GO" id="GO:0008236">
    <property type="term" value="F:serine-type peptidase activity"/>
    <property type="evidence" value="ECO:0007669"/>
    <property type="project" value="UniProtKB-KW"/>
</dbReference>
<dbReference type="GO" id="GO:0005198">
    <property type="term" value="F:structural molecule activity"/>
    <property type="evidence" value="ECO:0007669"/>
    <property type="project" value="InterPro"/>
</dbReference>
<dbReference type="GO" id="GO:0006351">
    <property type="term" value="P:DNA-templated transcription"/>
    <property type="evidence" value="ECO:0007669"/>
    <property type="project" value="InterPro"/>
</dbReference>
<dbReference type="GO" id="GO:0006508">
    <property type="term" value="P:proteolysis"/>
    <property type="evidence" value="ECO:0007669"/>
    <property type="project" value="UniProtKB-KW"/>
</dbReference>
<dbReference type="GO" id="GO:0052170">
    <property type="term" value="P:symbiont-mediated suppression of host innate immune response"/>
    <property type="evidence" value="ECO:0007669"/>
    <property type="project" value="UniProtKB-KW"/>
</dbReference>
<dbReference type="GO" id="GO:0039694">
    <property type="term" value="P:viral RNA genome replication"/>
    <property type="evidence" value="ECO:0007669"/>
    <property type="project" value="InterPro"/>
</dbReference>
<dbReference type="GO" id="GO:0075523">
    <property type="term" value="P:viral translational frameshifting"/>
    <property type="evidence" value="ECO:0007669"/>
    <property type="project" value="UniProtKB-KW"/>
</dbReference>
<dbReference type="CDD" id="cd23175">
    <property type="entry name" value="ps-ssRNAv_Potyviridae_RdRp"/>
    <property type="match status" value="1"/>
</dbReference>
<dbReference type="Gene3D" id="3.30.70.270">
    <property type="match status" value="1"/>
</dbReference>
<dbReference type="Gene3D" id="3.90.70.150">
    <property type="entry name" value="Helper component proteinase"/>
    <property type="match status" value="1"/>
</dbReference>
<dbReference type="Gene3D" id="3.40.50.300">
    <property type="entry name" value="P-loop containing nucleotide triphosphate hydrolases"/>
    <property type="match status" value="2"/>
</dbReference>
<dbReference type="Gene3D" id="2.40.10.10">
    <property type="entry name" value="Trypsin-like serine proteases"/>
    <property type="match status" value="2"/>
</dbReference>
<dbReference type="InterPro" id="IPR011545">
    <property type="entry name" value="DEAD/DEAH_box_helicase_dom"/>
</dbReference>
<dbReference type="InterPro" id="IPR043502">
    <property type="entry name" value="DNA/RNA_pol_sf"/>
</dbReference>
<dbReference type="InterPro" id="IPR001456">
    <property type="entry name" value="HC-pro"/>
</dbReference>
<dbReference type="InterPro" id="IPR031159">
    <property type="entry name" value="HC_PRO_CPD_dom"/>
</dbReference>
<dbReference type="InterPro" id="IPR042308">
    <property type="entry name" value="HC_PRO_CPD_sf"/>
</dbReference>
<dbReference type="InterPro" id="IPR014001">
    <property type="entry name" value="Helicase_ATP-bd"/>
</dbReference>
<dbReference type="InterPro" id="IPR001650">
    <property type="entry name" value="Helicase_C-like"/>
</dbReference>
<dbReference type="InterPro" id="IPR027417">
    <property type="entry name" value="P-loop_NTPase"/>
</dbReference>
<dbReference type="InterPro" id="IPR002540">
    <property type="entry name" value="Pept_S30_P1_potyvir"/>
</dbReference>
<dbReference type="InterPro" id="IPR009003">
    <property type="entry name" value="Peptidase_S1_PA"/>
</dbReference>
<dbReference type="InterPro" id="IPR043504">
    <property type="entry name" value="Peptidase_S1_PA_chymotrypsin"/>
</dbReference>
<dbReference type="InterPro" id="IPR001592">
    <property type="entry name" value="Poty_coat"/>
</dbReference>
<dbReference type="InterPro" id="IPR001730">
    <property type="entry name" value="Potyv_NIa-pro_dom"/>
</dbReference>
<dbReference type="InterPro" id="IPR039560">
    <property type="entry name" value="Potyvirid-P3"/>
</dbReference>
<dbReference type="InterPro" id="IPR013648">
    <property type="entry name" value="PP_Potyviridae"/>
</dbReference>
<dbReference type="InterPro" id="IPR043128">
    <property type="entry name" value="Rev_trsase/Diguanyl_cyclase"/>
</dbReference>
<dbReference type="InterPro" id="IPR001205">
    <property type="entry name" value="RNA-dir_pol_C"/>
</dbReference>
<dbReference type="InterPro" id="IPR007094">
    <property type="entry name" value="RNA-dir_pol_PSvirus"/>
</dbReference>
<dbReference type="PANTHER" id="PTHR43519">
    <property type="entry name" value="ATP-DEPENDENT RNA HELICASE HRPB"/>
    <property type="match status" value="1"/>
</dbReference>
<dbReference type="PANTHER" id="PTHR43519:SF1">
    <property type="entry name" value="ATP-DEPENDENT RNA HELICASE HRPB"/>
    <property type="match status" value="1"/>
</dbReference>
<dbReference type="Pfam" id="PF00270">
    <property type="entry name" value="DEAD"/>
    <property type="match status" value="1"/>
</dbReference>
<dbReference type="Pfam" id="PF00271">
    <property type="entry name" value="Helicase_C"/>
    <property type="match status" value="1"/>
</dbReference>
<dbReference type="Pfam" id="PF00863">
    <property type="entry name" value="Peptidase_C4"/>
    <property type="match status" value="1"/>
</dbReference>
<dbReference type="Pfam" id="PF00851">
    <property type="entry name" value="Peptidase_C6"/>
    <property type="match status" value="1"/>
</dbReference>
<dbReference type="Pfam" id="PF01577">
    <property type="entry name" value="Peptidase_S30"/>
    <property type="match status" value="1"/>
</dbReference>
<dbReference type="Pfam" id="PF00767">
    <property type="entry name" value="Poty_coat"/>
    <property type="match status" value="1"/>
</dbReference>
<dbReference type="Pfam" id="PF08440">
    <property type="entry name" value="Poty_PP"/>
    <property type="match status" value="1"/>
</dbReference>
<dbReference type="Pfam" id="PF13608">
    <property type="entry name" value="Potyvirid-P3"/>
    <property type="match status" value="1"/>
</dbReference>
<dbReference type="Pfam" id="PF00680">
    <property type="entry name" value="RdRP_1"/>
    <property type="match status" value="1"/>
</dbReference>
<dbReference type="PRINTS" id="PR00966">
    <property type="entry name" value="NIAPOTYPTASE"/>
</dbReference>
<dbReference type="SMART" id="SM00487">
    <property type="entry name" value="DEXDc"/>
    <property type="match status" value="1"/>
</dbReference>
<dbReference type="SMART" id="SM00490">
    <property type="entry name" value="HELICc"/>
    <property type="match status" value="1"/>
</dbReference>
<dbReference type="SUPFAM" id="SSF56672">
    <property type="entry name" value="DNA/RNA polymerases"/>
    <property type="match status" value="1"/>
</dbReference>
<dbReference type="SUPFAM" id="SSF52540">
    <property type="entry name" value="P-loop containing nucleoside triphosphate hydrolases"/>
    <property type="match status" value="2"/>
</dbReference>
<dbReference type="SUPFAM" id="SSF50494">
    <property type="entry name" value="Trypsin-like serine proteases"/>
    <property type="match status" value="1"/>
</dbReference>
<dbReference type="PROSITE" id="PS51744">
    <property type="entry name" value="HC_PRO_CPD"/>
    <property type="match status" value="1"/>
</dbReference>
<dbReference type="PROSITE" id="PS51192">
    <property type="entry name" value="HELICASE_ATP_BIND_1"/>
    <property type="match status" value="1"/>
</dbReference>
<dbReference type="PROSITE" id="PS51194">
    <property type="entry name" value="HELICASE_CTER"/>
    <property type="match status" value="1"/>
</dbReference>
<dbReference type="PROSITE" id="PS51436">
    <property type="entry name" value="POTYVIRUS_NIA_PRO"/>
    <property type="match status" value="1"/>
</dbReference>
<dbReference type="PROSITE" id="PS51871">
    <property type="entry name" value="PV_P1_PRO"/>
    <property type="match status" value="1"/>
</dbReference>
<dbReference type="PROSITE" id="PS50507">
    <property type="entry name" value="RDRP_SSRNA_POS"/>
    <property type="match status" value="1"/>
</dbReference>
<comment type="function">
    <molecule>Helper component proteinase</molecule>
    <text evidence="2">Required for aphid transmission and also has proteolytic activity. Only cleaves a Gly-Gly dipeptide at its own C-terminus. Interacts with virions and aphid stylets. Acts as a suppressor of RNA-mediated gene silencing, also known as post-transcriptional gene silencing (PTGS), a mechanism of plant viral defense that limits the accumulation of viral RNAs. May have RNA-binding activity.</text>
</comment>
<comment type="function">
    <molecule>Cytoplasmic inclusion protein</molecule>
    <text>Has helicase activity. It may be involved in replication.</text>
</comment>
<comment type="function">
    <molecule>6 kDa protein 1</molecule>
    <text evidence="4 8">Indispensable for virus replication (By similarity). Reduces the abundance of host transcripts related to jasmonic acid biosynthesis therefore altering the host defenses (By similarity). In order to increase its own stability, decreases host protein degradation pathways (By similarity).</text>
</comment>
<comment type="function">
    <molecule>6 kDa protein 2</molecule>
    <text evidence="3">Indispensable for virus replication.</text>
</comment>
<comment type="function">
    <molecule>Viral genome-linked protein</molecule>
    <text evidence="6">Mediates the cap-independent, EIF4E-dependent translation of viral genomic RNAs (By similarity). Binds to the cap-binding site of host EIF4E and thus interferes with the host EIF4E-dependent mRNA export and translation (By similarity). VPg-RNA directly binds EIF4E and is a template for transcription (By similarity). Also forms trimeric complexes with EIF4E-EIF4G, which are templates for translation (By similarity).</text>
</comment>
<comment type="function">
    <molecule>Nuclear inclusion protein A</molecule>
    <text evidence="2">Has RNA-binding and proteolytic activities.</text>
</comment>
<comment type="function">
    <molecule>Nuclear inclusion protein B</molecule>
    <text>An RNA-dependent RNA polymerase that plays an essential role in the virus replication.</text>
</comment>
<comment type="function">
    <molecule>Capsid protein</molecule>
    <text evidence="2">Involved in aphid transmission, cell-to-cell and systemis movement, encapsidation of the viral RNA and in the regulation of viral RNA amplification.</text>
</comment>
<comment type="catalytic activity">
    <molecule>Nuclear inclusion protein B</molecule>
    <reaction evidence="10">
        <text>RNA(n) + a ribonucleoside 5'-triphosphate = RNA(n+1) + diphosphate</text>
        <dbReference type="Rhea" id="RHEA:21248"/>
        <dbReference type="Rhea" id="RHEA-COMP:14527"/>
        <dbReference type="Rhea" id="RHEA-COMP:17342"/>
        <dbReference type="ChEBI" id="CHEBI:33019"/>
        <dbReference type="ChEBI" id="CHEBI:61557"/>
        <dbReference type="ChEBI" id="CHEBI:140395"/>
        <dbReference type="EC" id="2.7.7.48"/>
    </reaction>
</comment>
<comment type="catalytic activity">
    <molecule>Nuclear inclusion protein A</molecule>
    <reaction evidence="2">
        <text>Hydrolyzes glutaminyl bonds, and activity is further restricted by preferences for the amino acids in P6 - P1' that vary with the species of potyvirus, e.g. Glu-Xaa-Xaa-Tyr-Xaa-Gln-|-(Ser or Gly) for the enzyme from tobacco etch virus. The natural substrate is the viral polyprotein, but other proteins and oligopeptides containing the appropriate consensus sequence are also cleaved.</text>
        <dbReference type="EC" id="3.4.22.44"/>
    </reaction>
</comment>
<comment type="catalytic activity">
    <molecule>Helper component proteinase</molecule>
    <reaction evidence="2">
        <text>Hydrolyzes a Gly-|-Gly bond at its own C-terminus, commonly in the sequence -Tyr-Xaa-Val-Gly-|-Gly, in the processing of the potyviral polyprotein.</text>
        <dbReference type="EC" id="3.4.22.45"/>
    </reaction>
</comment>
<comment type="subunit">
    <molecule>Viral genome-linked protein</molecule>
    <text evidence="6">Interacts with host eIF4E protein (via cap-binding region); this interaction mediates the translation of the VPg-viral RNA conjugates (By similarity). Part of a complex that comprises VPg, RNA, host EIF4E and EIF4G; this interaction mediates the translation of the VPg-viral RNA conjugates (By similarity).</text>
</comment>
<comment type="subcellular location">
    <molecule>6 kDa protein 1</molecule>
    <subcellularLocation>
        <location>Host cytoplasmic vesicle</location>
    </subcellularLocation>
    <text evidence="4">Probably colocalizes with 6K2-induced vesicles associated with host chloroplasts.</text>
</comment>
<comment type="subcellular location">
    <molecule>6 kDa protein 2</molecule>
    <subcellularLocation>
        <location evidence="3">Host cytoplasmic vesicle</location>
    </subcellularLocation>
    <text evidence="3">6K-induced vesicles associate with host chloroplasts.</text>
</comment>
<comment type="subcellular location">
    <molecule>Viral genome-linked protein</molecule>
    <subcellularLocation>
        <location evidence="7">Host nucleus</location>
    </subcellularLocation>
    <text evidence="7">Binds to host plant eIF4E proteins in the host nucleus.</text>
</comment>
<comment type="subcellular location">
    <molecule>Capsid protein</molecule>
    <subcellularLocation>
        <location evidence="17">Virion</location>
    </subcellularLocation>
</comment>
<comment type="alternative products">
    <event type="ribosomal frameshifting"/>
    <isoform>
        <id>Q90069-1</id>
        <name>Genome polyprotein</name>
        <sequence type="displayed"/>
    </isoform>
    <isoform>
        <id>P0CK07-1</id>
        <name>P3N-PIPO polyprotein</name>
        <sequence type="external"/>
    </isoform>
</comment>
<comment type="domain">
    <molecule>Helper component proteinase</molecule>
    <text>The N-terminus is involved in interaction with stylets. The central part is involved in interaction with virions and the C-terminus is involved in cell-to cell movement of the virus.</text>
</comment>
<comment type="PTM">
    <molecule>Viral genome-linked protein</molecule>
    <text evidence="3">VPg is uridylylated by the polymerase and is covalently attached to the 5'-end of the genomic RNA. This uridylylated form acts as a nucleotide-peptide primer for the polymerase (By similarity).</text>
</comment>
<comment type="PTM">
    <molecule>Genome polyprotein</molecule>
    <text evidence="1">Potyviral RNA is expressed as two polyproteins which undergo post-translational proteolytic processing. Genome polyprotein is processed by NIa-pro, P1 and HC-pro proteinases resulting in the production of at least ten individual proteins. P3N-PIPO polyprotein is cleaved by P1 and HC-pro proteinases resulting in the production of three individual proteins. The P1 proteinase and the HC-pro cleave only their respective C-termini autocatalytically. 6K1 is essential for proper proteolytic separation of P3 from CI (By similarity).</text>
</comment>
<comment type="miscellaneous">
    <molecule>Isoform Genome polyprotein</molecule>
    <text>Produced by conventional translation.</text>
</comment>
<comment type="similarity">
    <text evidence="17">Belongs to the potyviridae genome polyprotein family.</text>
</comment>
<name>POLG_SBMVG</name>
<evidence type="ECO:0000250" key="1"/>
<evidence type="ECO:0000250" key="2">
    <source>
        <dbReference type="UniProtKB" id="P04517"/>
    </source>
</evidence>
<evidence type="ECO:0000250" key="3">
    <source>
        <dbReference type="UniProtKB" id="P09814"/>
    </source>
</evidence>
<evidence type="ECO:0000250" key="4">
    <source>
        <dbReference type="UniProtKB" id="P13529"/>
    </source>
</evidence>
<evidence type="ECO:0000250" key="5">
    <source>
        <dbReference type="UniProtKB" id="P17767"/>
    </source>
</evidence>
<evidence type="ECO:0000250" key="6">
    <source>
        <dbReference type="UniProtKB" id="P18247"/>
    </source>
</evidence>
<evidence type="ECO:0000250" key="7">
    <source>
        <dbReference type="UniProtKB" id="P21231"/>
    </source>
</evidence>
<evidence type="ECO:0000250" key="8">
    <source>
        <dbReference type="UniProtKB" id="P89509"/>
    </source>
</evidence>
<evidence type="ECO:0000255" key="9"/>
<evidence type="ECO:0000255" key="10">
    <source>
        <dbReference type="PROSITE-ProRule" id="PRU00539"/>
    </source>
</evidence>
<evidence type="ECO:0000255" key="11">
    <source>
        <dbReference type="PROSITE-ProRule" id="PRU00541"/>
    </source>
</evidence>
<evidence type="ECO:0000255" key="12">
    <source>
        <dbReference type="PROSITE-ProRule" id="PRU00542"/>
    </source>
</evidence>
<evidence type="ECO:0000255" key="13">
    <source>
        <dbReference type="PROSITE-ProRule" id="PRU00766"/>
    </source>
</evidence>
<evidence type="ECO:0000255" key="14">
    <source>
        <dbReference type="PROSITE-ProRule" id="PRU01080"/>
    </source>
</evidence>
<evidence type="ECO:0000255" key="15">
    <source>
        <dbReference type="PROSITE-ProRule" id="PRU01219"/>
    </source>
</evidence>
<evidence type="ECO:0000256" key="16">
    <source>
        <dbReference type="SAM" id="MobiDB-lite"/>
    </source>
</evidence>
<evidence type="ECO:0000305" key="17"/>
<keyword id="KW-0067">ATP-binding</keyword>
<keyword id="KW-0167">Capsid protein</keyword>
<keyword id="KW-0191">Covalent protein-RNA linkage</keyword>
<keyword id="KW-1139">Helical capsid protein</keyword>
<keyword id="KW-0347">Helicase</keyword>
<keyword id="KW-1036">Host cytoplasmic vesicle</keyword>
<keyword id="KW-1048">Host nucleus</keyword>
<keyword id="KW-0945">Host-virus interaction</keyword>
<keyword id="KW-0378">Hydrolase</keyword>
<keyword id="KW-1090">Inhibition of host innate immune response by virus</keyword>
<keyword id="KW-0547">Nucleotide-binding</keyword>
<keyword id="KW-0548">Nucleotidyltransferase</keyword>
<keyword id="KW-0597">Phosphoprotein</keyword>
<keyword id="KW-0645">Protease</keyword>
<keyword id="KW-0688">Ribosomal frameshifting</keyword>
<keyword id="KW-0696">RNA-directed RNA polymerase</keyword>
<keyword id="KW-0720">Serine protease</keyword>
<keyword id="KW-0941">Suppressor of RNA silencing</keyword>
<keyword id="KW-0788">Thiol protease</keyword>
<keyword id="KW-0808">Transferase</keyword>
<keyword id="KW-0899">Viral immunoevasion</keyword>
<keyword id="KW-0693">Viral RNA replication</keyword>
<keyword id="KW-0946">Virion</keyword>
<sequence>MATIMIGSMAISVPNTHVSRASNSVMPVQAVQMAKQVPSARGVLYTLKREGSTQVIKHEEALRKFQEAFDQDVGIQRRLLVNKHSSIQSTKEGWFDLASLNFRAGSSKEAAIARRKQEEEDFLNGKYEQQFYAGVSATKSMKFEGGSVGFRTKYWRPTPKKTKERRATSQCRKPTYVLEEVLSIASKSGKLVEFITGKGKRVKVCYVRKHGAILPKFSLPHEEGKYIHQELQYASTYEFLPYICMFAKYKSINADDITYGDSGLLFDERSSLTTNHTKLPYFVVRGRRNGKLVNALEVVENMEDIQHYSQNPEAQFFRGWKKVFDKMPPHVENHECTIDFTNEQCGELAAAISQSIFPVKKLSCKQCRQHIKHLSWEEYKQFLLAHMGCHGAEWETFQEIDGMRYVKRVIETSTAENASLQTSLEIVRLTQNYKSTHMLQIQDINKALMKGPSVTQSELEQASKQLLAMTQWWKNHMALTDEDALKVFRNKRSSKALLNPSLLCDNQLDKNGNFVWGERGRHSKRFFANYFEEVVPSEGYSKYVIRTNPNGQRELAIGSLIVPLDFERARMALQGKSVTREPITMSCISRQDGNFVYPCCCVTHDDGKAFYSELKSPTKRHLVIGTSGDPKYIDLPATDADRMYIAKEGFCYLNIFLAMLVNVNEDEAKDFTKMVRDVIVPRLGKWPTMLDVATAAYMLTVFHPETRNAELPRILVDHACQTMHVIDSFGSLTVGYHVLKAGTVNQLIQFASNDLQSEMKFYRVGGEVQQRMKCETALITSIFKPKRMIQILENDPYILLMGLVSPSILIHMYRMKHFEKGVELWISKEHSVAKIFIILGQLTKRVAANDVLLEQLEMISETSERFMSILEDCPQAPHSYKTAKDLLTMYIEGKASNNQLVENGFVDMNDKLYMAYEKIYSDRLKQEWRALSWLEKFSITWQLKRFAPHTEKCLTKKVVEESSASSGNFASVCFMNAQSHLRNVRNTLFQKCDQVWTASVRAFVRLIISTLHRCYSDIVYLVNICIIFSLLVQMTSVLQGIVNTARRDKALLSGWKRKEDEEAVIHLYEMCEKMEGGHPSIEKFLDHVKGVRPDLLPVAVSMTGQSEDVSAQAKTATQLQLEKIVAFMALLTMCIDNERSDAVFKVLSKLKAFFSTMGEDVKVQSLDEIQSIDEDKKLTIDFDLETNKESSSVSFDVKFEAWWNRQLEQNRVIPHYRSTGEFLEFTRETAAKIANLVATSSHTEFLIRGAVGSGKSTGLPHHLSRKGKVLLLEPTRPLAENVSKQLSFEPFYHNVTLRMRGLSKFGSSNIVVMTSGFAFHYYFNNPQQLSDFDFIIIDECHVQDSPTIAFNCALKEFEFSGKLIKVSATTPGRECEFTTQHPVKLKVEDHLSFQNFVQAQGTGSNADMIQHGNNLLVYVASYNEVDQLSRLLTEKHYKVTKVDGRTMQMGNVEIATTGTEVKPHFIVATNIIENGVTLDIDCVIDFGLKVVATLDTDNRCVRYNKQSVSYGERIQRLGRVGRCKPGFALRIGHTGKGVEEVPEFIATEAAFLSFAYGLPVTTQSVSTNILSRCTVKQARVALNFELTPFFTTNFIKYDGSMHVIDTRLLKSYKLRESEMLLTKLAIPYQFVGQWVTVKEYERQGIHLNCPEKVKIPFYVHGIPDKLYEMLWDTVCKYKNDAGFGSVKSVNATKISYTLSTDPTAIPRTLAILDHLLSEEMTKKSHFDTIGSAVTGYSFSLAGIADGFRKRYLKDYTQHNIAVLQQAKAQLLEFDCNKVDINNLHNVEGIGILNAVQLQSKHEVSKFLQLKGKWDGKKFMNDAVVAIFTLVGGGWMLWDYFTRVIREPVSTQGKKRQIQKLKFRDAFDRKIGREVYADDYTMEHRFGEAYTKKGKQKGSTRTKGMGRKSRNFIHLYGVEPENYSMIRFVDPLTGHTMDEHPRVDIRMVQQEFEEIRKDMIGEGELDRQRVYHNPGLQAYFIGKNTEEALKVDLTPHRPTLLCQNSNAIAGFPEREDELRQTGLPQVVSKSDVPRAKERVEMESKSVYKGLRDYSGISTLICQLTNSSDGHKETMFGVGYGSFIITNGHLFRRNNGMLTVKTWHGEFVIHNTTQLKIHFIQGRDVILIRMPKDFPPFGKRNLFRQPKREERVCMVGTNFQEKSLRATVSESSMILPEGKGSFWIHWITTQDGFCGLPLVSVNDGHIVGIHGLTSNDSEKNFFVPLTDGFEKEYLENADNLSWDKHWFWEPSKIAWGSLNLVEEQPKEEFKISKLVSDLFGNTVTVQGRKERWVLDAMEGNLAACGQDDSALVTKHVVKGKCPYFAQYLSVNQEAKSFFEPLMGAYQPSRLNKDAFKRGFFKYNKPVVLNEVDFQSFERAVAGVKLMMMEFDFKECVYVTDPDEIYDSLNMKAAVGAQYKGKKQDYFSGMDSFDKERLLYLSCERLFYGEKGVWNGSLKAELRPIEKVQANKTRTFTAAPIDTLLGAKVCVDDFNNQFYSLNLTCPWTVGMTKFYRGWDKLMRSLPDGWVYCHADGSQFDSSLTPLLLNAVLDVRSFFMEDWWVGREMLENLYAEIVYTPILAPDGTIFKKFRGNNSGQPSTVVDNTLMVVIALYYSGCKQGWSEEDIQERLVFFANGDDIILAVSDKDTWLYDTLSTSFAELGLNYNFEERTKKREELWFMSHKAMLVDGIYIPKLEPERIVSILEWDRSKELMHRTEAICASMIEAWGYTELLQEIRKFYLWLLNKDEFKELASSGKAPYIAETALRKLYTDVNAQTSELQRYLEVLDFTHADDCCESVSLQSGKEKEGDMDAGKDPKKSTSSSKGAGTSSKDVNVGSKGKVVPRLQKITRKMNLPMVEGKIILSLDHLLEYKPNQVDLFNTRATRTQFEAWYNAVKDEYELDDEQMGVVMNGFMVWCIDNGTSPDANGVWVMMDGEEQIEYPLKPIVENAKPTLRQIMHHFSDAAEAYIEMRNSESPYMPRYGLLRNLRDRELARYAFDFYEVTSKTPNRAREAIAQMKAAALSGVNNKLFGLDGNISTNSENTERHTARDVNQNMHTLLGMGPPQ</sequence>